<keyword id="KW-0997">Cell inner membrane</keyword>
<keyword id="KW-1003">Cell membrane</keyword>
<keyword id="KW-0143">Chaperone</keyword>
<keyword id="KW-0472">Membrane</keyword>
<keyword id="KW-0653">Protein transport</keyword>
<keyword id="KW-0812">Transmembrane</keyword>
<keyword id="KW-1133">Transmembrane helix</keyword>
<keyword id="KW-0813">Transport</keyword>
<reference key="1">
    <citation type="submission" date="2007-09" db="EMBL/GenBank/DDBJ databases">
        <title>Complete genome sequence of Rickettsia akari.</title>
        <authorList>
            <person name="Madan A."/>
            <person name="Fahey J."/>
            <person name="Helton E."/>
            <person name="Ketteman M."/>
            <person name="Madan A."/>
            <person name="Rodrigues S."/>
            <person name="Sanchez A."/>
            <person name="Whiting M."/>
            <person name="Dasch G."/>
            <person name="Eremeeva M."/>
        </authorList>
    </citation>
    <scope>NUCLEOTIDE SEQUENCE [LARGE SCALE GENOMIC DNA]</scope>
    <source>
        <strain>Hartford</strain>
    </source>
</reference>
<protein>
    <recommendedName>
        <fullName evidence="1">Membrane protein insertase YidC</fullName>
    </recommendedName>
    <alternativeName>
        <fullName evidence="1">Foldase YidC</fullName>
    </alternativeName>
    <alternativeName>
        <fullName evidence="1">Membrane integrase YidC</fullName>
    </alternativeName>
    <alternativeName>
        <fullName evidence="1">Membrane protein YidC</fullName>
    </alternativeName>
</protein>
<proteinExistence type="inferred from homology"/>
<name>YIDC_RICAH</name>
<sequence>MNNNIINLIAAIVLSLSIIFGWQYFVIKPEQKKQQQQIAVQKAANLKKQQLKALVEPATDIVVQEESQVQRIKIESESLTGSISLKGLRFDDLILKKYKQDLSKNSSDVVLFSPTNTEHSYFAEIGLVSNLSSVKLPNNDTIWSSDGEILSPEKPVNLFWVNEDGVKFLVTITVDKNYLFTIEQTIVNNSDKELPIQSYGLINRKYTAVEKAVNILHQGPIGCIDENLKEYSYDDIKDKKSEKFAASKVDWIGITDKYWLSALIPDKSSNYSSNFNYAVKQGIEKYQVDFISPVQIIKPGENFAIKSRIFAGAKKVDLLDQYEKQYDIKLFDRAIDFGWFYIITKPVFYAMNFFYGYVGNFGVSILIVTVIIKLLMFTLANKSYRSMKKIKNLQPEIDRIKNLYSDDKARLNQEIMALYKKEKVNPVAGCLPILVQIPVFFSIYKVLYVTIEMRQAQFYGWIKDLSAPDPTTIFNLFGLLPFSPPSFLMIGAWPILMAITMFLQQKMSPEPADPMQAQVMKFMPLIFLFMFSSFPVGLLIYWSWNNILSIIQQYYINKFN</sequence>
<gene>
    <name evidence="1" type="primary">yidC</name>
    <name type="ordered locus">A1C_00405</name>
</gene>
<feature type="chain" id="PRO_1000070154" description="Membrane protein insertase YidC">
    <location>
        <begin position="1"/>
        <end position="560"/>
    </location>
</feature>
<feature type="transmembrane region" description="Helical" evidence="1">
    <location>
        <begin position="5"/>
        <end position="25"/>
    </location>
</feature>
<feature type="transmembrane region" description="Helical" evidence="1">
    <location>
        <begin position="334"/>
        <end position="354"/>
    </location>
</feature>
<feature type="transmembrane region" description="Helical" evidence="1">
    <location>
        <begin position="357"/>
        <end position="377"/>
    </location>
</feature>
<feature type="transmembrane region" description="Helical" evidence="1">
    <location>
        <begin position="431"/>
        <end position="451"/>
    </location>
</feature>
<feature type="transmembrane region" description="Helical" evidence="1">
    <location>
        <begin position="476"/>
        <end position="496"/>
    </location>
</feature>
<feature type="transmembrane region" description="Helical" evidence="1">
    <location>
        <begin position="522"/>
        <end position="542"/>
    </location>
</feature>
<organism>
    <name type="scientific">Rickettsia akari (strain Hartford)</name>
    <dbReference type="NCBI Taxonomy" id="293614"/>
    <lineage>
        <taxon>Bacteria</taxon>
        <taxon>Pseudomonadati</taxon>
        <taxon>Pseudomonadota</taxon>
        <taxon>Alphaproteobacteria</taxon>
        <taxon>Rickettsiales</taxon>
        <taxon>Rickettsiaceae</taxon>
        <taxon>Rickettsieae</taxon>
        <taxon>Rickettsia</taxon>
        <taxon>spotted fever group</taxon>
    </lineage>
</organism>
<accession>A8GLY9</accession>
<comment type="function">
    <text evidence="1">Required for the insertion and/or proper folding and/or complex formation of integral membrane proteins into the membrane. Involved in integration of membrane proteins that insert both dependently and independently of the Sec translocase complex, as well as at least some lipoproteins. Aids folding of multispanning membrane proteins.</text>
</comment>
<comment type="subunit">
    <text evidence="1">Interacts with the Sec translocase complex via SecD. Specifically interacts with transmembrane segments of nascent integral membrane proteins during membrane integration.</text>
</comment>
<comment type="subcellular location">
    <subcellularLocation>
        <location evidence="1">Cell inner membrane</location>
        <topology evidence="1">Multi-pass membrane protein</topology>
    </subcellularLocation>
</comment>
<comment type="similarity">
    <text evidence="1">Belongs to the OXA1/ALB3/YidC family. Type 1 subfamily.</text>
</comment>
<evidence type="ECO:0000255" key="1">
    <source>
        <dbReference type="HAMAP-Rule" id="MF_01810"/>
    </source>
</evidence>
<dbReference type="EMBL" id="CP000847">
    <property type="protein sequence ID" value="ABV74414.1"/>
    <property type="molecule type" value="Genomic_DNA"/>
</dbReference>
<dbReference type="RefSeq" id="WP_012013284.1">
    <property type="nucleotide sequence ID" value="NC_009881.1"/>
</dbReference>
<dbReference type="SMR" id="A8GLY9"/>
<dbReference type="STRING" id="293614.A1C_00405"/>
<dbReference type="KEGG" id="rak:A1C_00405"/>
<dbReference type="eggNOG" id="COG0706">
    <property type="taxonomic scope" value="Bacteria"/>
</dbReference>
<dbReference type="HOGENOM" id="CLU_016535_1_0_5"/>
<dbReference type="Proteomes" id="UP000006830">
    <property type="component" value="Chromosome"/>
</dbReference>
<dbReference type="GO" id="GO:0005886">
    <property type="term" value="C:plasma membrane"/>
    <property type="evidence" value="ECO:0007669"/>
    <property type="project" value="UniProtKB-SubCell"/>
</dbReference>
<dbReference type="GO" id="GO:0032977">
    <property type="term" value="F:membrane insertase activity"/>
    <property type="evidence" value="ECO:0007669"/>
    <property type="project" value="InterPro"/>
</dbReference>
<dbReference type="GO" id="GO:0051205">
    <property type="term" value="P:protein insertion into membrane"/>
    <property type="evidence" value="ECO:0007669"/>
    <property type="project" value="TreeGrafter"/>
</dbReference>
<dbReference type="GO" id="GO:0015031">
    <property type="term" value="P:protein transport"/>
    <property type="evidence" value="ECO:0007669"/>
    <property type="project" value="UniProtKB-KW"/>
</dbReference>
<dbReference type="CDD" id="cd20070">
    <property type="entry name" value="5TM_YidC_Alb3"/>
    <property type="match status" value="1"/>
</dbReference>
<dbReference type="CDD" id="cd19961">
    <property type="entry name" value="EcYidC-like_peri"/>
    <property type="match status" value="1"/>
</dbReference>
<dbReference type="Gene3D" id="2.70.98.90">
    <property type="match status" value="1"/>
</dbReference>
<dbReference type="HAMAP" id="MF_01810">
    <property type="entry name" value="YidC_type1"/>
    <property type="match status" value="1"/>
</dbReference>
<dbReference type="InterPro" id="IPR019998">
    <property type="entry name" value="Membr_insert_YidC"/>
</dbReference>
<dbReference type="InterPro" id="IPR028053">
    <property type="entry name" value="Membr_insert_YidC_N"/>
</dbReference>
<dbReference type="InterPro" id="IPR001708">
    <property type="entry name" value="YidC/ALB3/OXA1/COX18"/>
</dbReference>
<dbReference type="InterPro" id="IPR028055">
    <property type="entry name" value="YidC/Oxa/ALB_C"/>
</dbReference>
<dbReference type="InterPro" id="IPR047196">
    <property type="entry name" value="YidC_ALB_C"/>
</dbReference>
<dbReference type="InterPro" id="IPR038221">
    <property type="entry name" value="YidC_periplasmic_sf"/>
</dbReference>
<dbReference type="NCBIfam" id="NF002353">
    <property type="entry name" value="PRK01318.1-4"/>
    <property type="match status" value="1"/>
</dbReference>
<dbReference type="NCBIfam" id="TIGR03593">
    <property type="entry name" value="yidC_nterm"/>
    <property type="match status" value="1"/>
</dbReference>
<dbReference type="NCBIfam" id="TIGR03592">
    <property type="entry name" value="yidC_oxa1_cterm"/>
    <property type="match status" value="1"/>
</dbReference>
<dbReference type="PANTHER" id="PTHR12428:SF65">
    <property type="entry name" value="CYTOCHROME C OXIDASE ASSEMBLY PROTEIN COX18, MITOCHONDRIAL"/>
    <property type="match status" value="1"/>
</dbReference>
<dbReference type="PANTHER" id="PTHR12428">
    <property type="entry name" value="OXA1"/>
    <property type="match status" value="1"/>
</dbReference>
<dbReference type="Pfam" id="PF02096">
    <property type="entry name" value="60KD_IMP"/>
    <property type="match status" value="1"/>
</dbReference>
<dbReference type="Pfam" id="PF14849">
    <property type="entry name" value="YidC_periplas"/>
    <property type="match status" value="1"/>
</dbReference>
<dbReference type="PRINTS" id="PR00701">
    <property type="entry name" value="60KDINNERMP"/>
</dbReference>
<dbReference type="PRINTS" id="PR01900">
    <property type="entry name" value="YIDCPROTEIN"/>
</dbReference>